<gene>
    <name evidence="1" type="primary">thrB</name>
    <name type="ordered locus">CGSHiEE_02845</name>
</gene>
<comment type="function">
    <text evidence="1">Catalyzes the ATP-dependent phosphorylation of L-homoserine to L-homoserine phosphate.</text>
</comment>
<comment type="catalytic activity">
    <reaction evidence="1">
        <text>L-homoserine + ATP = O-phospho-L-homoserine + ADP + H(+)</text>
        <dbReference type="Rhea" id="RHEA:13985"/>
        <dbReference type="ChEBI" id="CHEBI:15378"/>
        <dbReference type="ChEBI" id="CHEBI:30616"/>
        <dbReference type="ChEBI" id="CHEBI:57476"/>
        <dbReference type="ChEBI" id="CHEBI:57590"/>
        <dbReference type="ChEBI" id="CHEBI:456216"/>
        <dbReference type="EC" id="2.7.1.39"/>
    </reaction>
</comment>
<comment type="pathway">
    <text evidence="1">Amino-acid biosynthesis; L-threonine biosynthesis; L-threonine from L-aspartate: step 4/5.</text>
</comment>
<comment type="subcellular location">
    <subcellularLocation>
        <location evidence="1">Cytoplasm</location>
    </subcellularLocation>
</comment>
<comment type="similarity">
    <text evidence="1">Belongs to the GHMP kinase family. Homoserine kinase subfamily.</text>
</comment>
<feature type="chain" id="PRO_1000049134" description="Homoserine kinase">
    <location>
        <begin position="1"/>
        <end position="314"/>
    </location>
</feature>
<feature type="binding site" evidence="1">
    <location>
        <begin position="96"/>
        <end position="106"/>
    </location>
    <ligand>
        <name>ATP</name>
        <dbReference type="ChEBI" id="CHEBI:30616"/>
    </ligand>
</feature>
<protein>
    <recommendedName>
        <fullName evidence="1">Homoserine kinase</fullName>
        <shortName evidence="1">HK</shortName>
        <shortName evidence="1">HSK</shortName>
        <ecNumber evidence="1">2.7.1.39</ecNumber>
    </recommendedName>
</protein>
<name>KHSE_HAEIE</name>
<keyword id="KW-0028">Amino-acid biosynthesis</keyword>
<keyword id="KW-0067">ATP-binding</keyword>
<keyword id="KW-0963">Cytoplasm</keyword>
<keyword id="KW-0418">Kinase</keyword>
<keyword id="KW-0547">Nucleotide-binding</keyword>
<keyword id="KW-0791">Threonine biosynthesis</keyword>
<keyword id="KW-0808">Transferase</keyword>
<evidence type="ECO:0000255" key="1">
    <source>
        <dbReference type="HAMAP-Rule" id="MF_00384"/>
    </source>
</evidence>
<organism>
    <name type="scientific">Haemophilus influenzae (strain PittEE)</name>
    <dbReference type="NCBI Taxonomy" id="374930"/>
    <lineage>
        <taxon>Bacteria</taxon>
        <taxon>Pseudomonadati</taxon>
        <taxon>Pseudomonadota</taxon>
        <taxon>Gammaproteobacteria</taxon>
        <taxon>Pasteurellales</taxon>
        <taxon>Pasteurellaceae</taxon>
        <taxon>Haemophilus</taxon>
    </lineage>
</organism>
<sequence length="314" mass="34310">MLRIYAPASSANISVGFDTLGAAISPIDGSLLGDVVQIESISTGFELESAGYFVRKLPKEPQKNIVYQAYVLFSEQLKLRGANVKPLRLTLEKNMPIGSGLGSSACSIVAALVALNQFHNEPFSKMELLEMMGELEGRISGSIHYDNVAPCYLGGVQFMVQSLGNICQKLPFFDNWYWVLAYPGIEVSTAEARAILPKSYTRQNVIAHGRHLGGFVHACHTHQENLAAIMMKDVIAEPYRESLLPNFAEVKQATRDLGALATGISGSGPTIFSIAPDLQTAIKLSSYLESHYLQNNEGFVHVCKVDNEGTREIK</sequence>
<accession>A5UB54</accession>
<proteinExistence type="inferred from homology"/>
<dbReference type="EC" id="2.7.1.39" evidence="1"/>
<dbReference type="EMBL" id="CP000671">
    <property type="protein sequence ID" value="ABQ98005.1"/>
    <property type="molecule type" value="Genomic_DNA"/>
</dbReference>
<dbReference type="SMR" id="A5UB54"/>
<dbReference type="KEGG" id="hip:CGSHiEE_02845"/>
<dbReference type="HOGENOM" id="CLU_041243_1_1_6"/>
<dbReference type="UniPathway" id="UPA00050">
    <property type="reaction ID" value="UER00064"/>
</dbReference>
<dbReference type="GO" id="GO:0005737">
    <property type="term" value="C:cytoplasm"/>
    <property type="evidence" value="ECO:0007669"/>
    <property type="project" value="UniProtKB-SubCell"/>
</dbReference>
<dbReference type="GO" id="GO:0005524">
    <property type="term" value="F:ATP binding"/>
    <property type="evidence" value="ECO:0007669"/>
    <property type="project" value="UniProtKB-UniRule"/>
</dbReference>
<dbReference type="GO" id="GO:0004413">
    <property type="term" value="F:homoserine kinase activity"/>
    <property type="evidence" value="ECO:0007669"/>
    <property type="project" value="UniProtKB-UniRule"/>
</dbReference>
<dbReference type="GO" id="GO:0009088">
    <property type="term" value="P:threonine biosynthetic process"/>
    <property type="evidence" value="ECO:0007669"/>
    <property type="project" value="UniProtKB-UniRule"/>
</dbReference>
<dbReference type="Gene3D" id="3.30.230.10">
    <property type="match status" value="1"/>
</dbReference>
<dbReference type="Gene3D" id="3.30.70.890">
    <property type="entry name" value="GHMP kinase, C-terminal domain"/>
    <property type="match status" value="1"/>
</dbReference>
<dbReference type="HAMAP" id="MF_00384">
    <property type="entry name" value="Homoser_kinase"/>
    <property type="match status" value="1"/>
</dbReference>
<dbReference type="InterPro" id="IPR013750">
    <property type="entry name" value="GHMP_kinase_C_dom"/>
</dbReference>
<dbReference type="InterPro" id="IPR036554">
    <property type="entry name" value="GHMP_kinase_C_sf"/>
</dbReference>
<dbReference type="InterPro" id="IPR006204">
    <property type="entry name" value="GHMP_kinase_N_dom"/>
</dbReference>
<dbReference type="InterPro" id="IPR006203">
    <property type="entry name" value="GHMP_knse_ATP-bd_CS"/>
</dbReference>
<dbReference type="InterPro" id="IPR000870">
    <property type="entry name" value="Homoserine_kinase"/>
</dbReference>
<dbReference type="InterPro" id="IPR020568">
    <property type="entry name" value="Ribosomal_Su5_D2-typ_SF"/>
</dbReference>
<dbReference type="InterPro" id="IPR014721">
    <property type="entry name" value="Ribsml_uS5_D2-typ_fold_subgr"/>
</dbReference>
<dbReference type="NCBIfam" id="NF002288">
    <property type="entry name" value="PRK01212.1-4"/>
    <property type="match status" value="1"/>
</dbReference>
<dbReference type="NCBIfam" id="TIGR00191">
    <property type="entry name" value="thrB"/>
    <property type="match status" value="1"/>
</dbReference>
<dbReference type="PANTHER" id="PTHR20861:SF1">
    <property type="entry name" value="HOMOSERINE KINASE"/>
    <property type="match status" value="1"/>
</dbReference>
<dbReference type="PANTHER" id="PTHR20861">
    <property type="entry name" value="HOMOSERINE/4-DIPHOSPHOCYTIDYL-2-C-METHYL-D-ERYTHRITOL KINASE"/>
    <property type="match status" value="1"/>
</dbReference>
<dbReference type="Pfam" id="PF08544">
    <property type="entry name" value="GHMP_kinases_C"/>
    <property type="match status" value="1"/>
</dbReference>
<dbReference type="Pfam" id="PF00288">
    <property type="entry name" value="GHMP_kinases_N"/>
    <property type="match status" value="1"/>
</dbReference>
<dbReference type="PIRSF" id="PIRSF000676">
    <property type="entry name" value="Homoser_kin"/>
    <property type="match status" value="1"/>
</dbReference>
<dbReference type="PRINTS" id="PR00958">
    <property type="entry name" value="HOMSERKINASE"/>
</dbReference>
<dbReference type="SUPFAM" id="SSF55060">
    <property type="entry name" value="GHMP Kinase, C-terminal domain"/>
    <property type="match status" value="1"/>
</dbReference>
<dbReference type="SUPFAM" id="SSF54211">
    <property type="entry name" value="Ribosomal protein S5 domain 2-like"/>
    <property type="match status" value="1"/>
</dbReference>
<dbReference type="PROSITE" id="PS00627">
    <property type="entry name" value="GHMP_KINASES_ATP"/>
    <property type="match status" value="1"/>
</dbReference>
<reference key="1">
    <citation type="journal article" date="2007" name="Genome Biol.">
        <title>Characterization and modeling of the Haemophilus influenzae core and supragenomes based on the complete genomic sequences of Rd and 12 clinical nontypeable strains.</title>
        <authorList>
            <person name="Hogg J.S."/>
            <person name="Hu F.Z."/>
            <person name="Janto B."/>
            <person name="Boissy R."/>
            <person name="Hayes J."/>
            <person name="Keefe R."/>
            <person name="Post J.C."/>
            <person name="Ehrlich G.D."/>
        </authorList>
    </citation>
    <scope>NUCLEOTIDE SEQUENCE [LARGE SCALE GENOMIC DNA]</scope>
    <source>
        <strain>PittEE</strain>
    </source>
</reference>